<feature type="signal peptide" evidence="2">
    <location>
        <begin position="1"/>
        <end position="16"/>
    </location>
</feature>
<feature type="chain" id="PRO_0000416884" description="Cation channel sperm-associated auxiliary subunit delta">
    <location>
        <begin position="17"/>
        <end position="805"/>
    </location>
</feature>
<feature type="topological domain" description="Extracellular" evidence="4">
    <location>
        <begin position="17"/>
        <end position="723"/>
    </location>
</feature>
<feature type="transmembrane region" description="Helical" evidence="4">
    <location>
        <begin position="724"/>
        <end position="745"/>
    </location>
</feature>
<feature type="topological domain" description="Cytoplasmic" evidence="4">
    <location>
        <begin position="746"/>
        <end position="805"/>
    </location>
</feature>
<feature type="glycosylation site" description="N-linked (GlcNAc...) asparagine" evidence="4">
    <location>
        <position position="227"/>
    </location>
</feature>
<feature type="glycosylation site" description="N-linked (GlcNAc...) asparagine" evidence="2">
    <location>
        <position position="419"/>
    </location>
</feature>
<feature type="glycosylation site" description="N-linked (GlcNAc...) asparagine" evidence="4">
    <location>
        <position position="469"/>
    </location>
</feature>
<feature type="glycosylation site" description="N-linked (GlcNAc...) asparagine" evidence="4">
    <location>
        <position position="535"/>
    </location>
</feature>
<feature type="glycosylation site" description="N-linked (GlcNAc...) asparagine" evidence="4">
    <location>
        <position position="627"/>
    </location>
</feature>
<feature type="disulfide bond" evidence="4 11">
    <location>
        <begin position="20"/>
        <end position="366"/>
    </location>
</feature>
<feature type="disulfide bond" evidence="4 11">
    <location>
        <begin position="56"/>
        <end position="143"/>
    </location>
</feature>
<feature type="disulfide bond" evidence="4 11">
    <location>
        <begin position="142"/>
        <end position="149"/>
    </location>
</feature>
<feature type="disulfide bond" evidence="4 11">
    <location>
        <begin position="384"/>
        <end position="493"/>
    </location>
</feature>
<feature type="disulfide bond" evidence="4 11">
    <location>
        <begin position="507"/>
        <end position="701"/>
    </location>
</feature>
<feature type="disulfide bond" evidence="4 11">
    <location>
        <begin position="522"/>
        <end position="569"/>
    </location>
</feature>
<feature type="disulfide bond" evidence="4 11">
    <location>
        <begin position="621"/>
        <end position="651"/>
    </location>
</feature>
<feature type="splice variant" id="VSP_042980" description="In isoform 2." evidence="8">
    <location>
        <begin position="1"/>
        <end position="182"/>
    </location>
</feature>
<feature type="splice variant" id="VSP_042981" description="In isoform 2." evidence="8">
    <original>N</original>
    <variation>NVELLESTMINTMFTIDMNSKLKLSALMIPRKGENPTPL</variation>
    <location>
        <position position="385"/>
    </location>
</feature>
<feature type="splice variant" id="VSP_042982" description="In isoform 3." evidence="6 7">
    <location>
        <begin position="386"/>
        <end position="423"/>
    </location>
</feature>
<feature type="sequence conflict" description="In Ref. 1; ADU32560." evidence="9" ref="1">
    <original>G</original>
    <variation>V</variation>
    <location>
        <position position="112"/>
    </location>
</feature>
<feature type="strand" evidence="12">
    <location>
        <begin position="22"/>
        <end position="25"/>
    </location>
</feature>
<feature type="strand" evidence="12">
    <location>
        <begin position="39"/>
        <end position="41"/>
    </location>
</feature>
<feature type="strand" evidence="12">
    <location>
        <begin position="43"/>
        <end position="48"/>
    </location>
</feature>
<feature type="strand" evidence="12">
    <location>
        <begin position="50"/>
        <end position="53"/>
    </location>
</feature>
<feature type="strand" evidence="12">
    <location>
        <begin position="61"/>
        <end position="67"/>
    </location>
</feature>
<feature type="strand" evidence="12">
    <location>
        <begin position="69"/>
        <end position="75"/>
    </location>
</feature>
<feature type="strand" evidence="12">
    <location>
        <begin position="94"/>
        <end position="99"/>
    </location>
</feature>
<feature type="strand" evidence="12">
    <location>
        <begin position="102"/>
        <end position="110"/>
    </location>
</feature>
<feature type="strand" evidence="12">
    <location>
        <begin position="113"/>
        <end position="121"/>
    </location>
</feature>
<feature type="strand" evidence="12">
    <location>
        <begin position="124"/>
        <end position="126"/>
    </location>
</feature>
<feature type="strand" evidence="12">
    <location>
        <begin position="135"/>
        <end position="139"/>
    </location>
</feature>
<feature type="strand" evidence="12">
    <location>
        <begin position="144"/>
        <end position="146"/>
    </location>
</feature>
<feature type="helix" evidence="12">
    <location>
        <begin position="147"/>
        <end position="154"/>
    </location>
</feature>
<feature type="strand" evidence="12">
    <location>
        <begin position="156"/>
        <end position="159"/>
    </location>
</feature>
<feature type="turn" evidence="12">
    <location>
        <begin position="165"/>
        <end position="167"/>
    </location>
</feature>
<feature type="strand" evidence="12">
    <location>
        <begin position="170"/>
        <end position="175"/>
    </location>
</feature>
<feature type="turn" evidence="12">
    <location>
        <begin position="176"/>
        <end position="178"/>
    </location>
</feature>
<feature type="strand" evidence="12">
    <location>
        <begin position="181"/>
        <end position="183"/>
    </location>
</feature>
<feature type="helix" evidence="12">
    <location>
        <begin position="185"/>
        <end position="188"/>
    </location>
</feature>
<feature type="strand" evidence="12">
    <location>
        <begin position="193"/>
        <end position="201"/>
    </location>
</feature>
<feature type="turn" evidence="12">
    <location>
        <begin position="202"/>
        <end position="205"/>
    </location>
</feature>
<feature type="strand" evidence="12">
    <location>
        <begin position="206"/>
        <end position="221"/>
    </location>
</feature>
<feature type="turn" evidence="12">
    <location>
        <begin position="225"/>
        <end position="228"/>
    </location>
</feature>
<feature type="strand" evidence="12">
    <location>
        <begin position="241"/>
        <end position="244"/>
    </location>
</feature>
<feature type="strand" evidence="12">
    <location>
        <begin position="252"/>
        <end position="256"/>
    </location>
</feature>
<feature type="strand" evidence="12">
    <location>
        <begin position="259"/>
        <end position="269"/>
    </location>
</feature>
<feature type="strand" evidence="12">
    <location>
        <begin position="274"/>
        <end position="277"/>
    </location>
</feature>
<feature type="strand" evidence="12">
    <location>
        <begin position="280"/>
        <end position="283"/>
    </location>
</feature>
<feature type="helix" evidence="12">
    <location>
        <begin position="286"/>
        <end position="289"/>
    </location>
</feature>
<feature type="strand" evidence="12">
    <location>
        <begin position="293"/>
        <end position="298"/>
    </location>
</feature>
<feature type="strand" evidence="12">
    <location>
        <begin position="303"/>
        <end position="307"/>
    </location>
</feature>
<feature type="turn" evidence="12">
    <location>
        <begin position="308"/>
        <end position="310"/>
    </location>
</feature>
<feature type="strand" evidence="12">
    <location>
        <begin position="311"/>
        <end position="316"/>
    </location>
</feature>
<feature type="strand" evidence="12">
    <location>
        <begin position="323"/>
        <end position="326"/>
    </location>
</feature>
<feature type="strand" evidence="12">
    <location>
        <begin position="338"/>
        <end position="343"/>
    </location>
</feature>
<feature type="strand" evidence="12">
    <location>
        <begin position="346"/>
        <end position="353"/>
    </location>
</feature>
<feature type="turn" evidence="12">
    <location>
        <begin position="356"/>
        <end position="358"/>
    </location>
</feature>
<feature type="strand" evidence="12">
    <location>
        <begin position="360"/>
        <end position="369"/>
    </location>
</feature>
<feature type="helix" evidence="12">
    <location>
        <begin position="370"/>
        <end position="373"/>
    </location>
</feature>
<feature type="turn" evidence="12">
    <location>
        <begin position="377"/>
        <end position="379"/>
    </location>
</feature>
<feature type="strand" evidence="12">
    <location>
        <begin position="385"/>
        <end position="390"/>
    </location>
</feature>
<feature type="strand" evidence="12">
    <location>
        <begin position="398"/>
        <end position="400"/>
    </location>
</feature>
<feature type="strand" evidence="12">
    <location>
        <begin position="406"/>
        <end position="414"/>
    </location>
</feature>
<feature type="strand" evidence="12">
    <location>
        <begin position="422"/>
        <end position="427"/>
    </location>
</feature>
<feature type="turn" evidence="12">
    <location>
        <begin position="429"/>
        <end position="431"/>
    </location>
</feature>
<feature type="strand" evidence="12">
    <location>
        <begin position="432"/>
        <end position="443"/>
    </location>
</feature>
<feature type="strand" evidence="12">
    <location>
        <begin position="449"/>
        <end position="459"/>
    </location>
</feature>
<feature type="helix" evidence="12">
    <location>
        <begin position="460"/>
        <end position="463"/>
    </location>
</feature>
<feature type="helix" evidence="12">
    <location>
        <begin position="468"/>
        <end position="471"/>
    </location>
</feature>
<feature type="strand" evidence="12">
    <location>
        <begin position="474"/>
        <end position="476"/>
    </location>
</feature>
<feature type="strand" evidence="12">
    <location>
        <begin position="478"/>
        <end position="486"/>
    </location>
</feature>
<feature type="strand" evidence="12">
    <location>
        <begin position="494"/>
        <end position="496"/>
    </location>
</feature>
<feature type="strand" evidence="12">
    <location>
        <begin position="499"/>
        <end position="506"/>
    </location>
</feature>
<feature type="strand" evidence="12">
    <location>
        <begin position="512"/>
        <end position="515"/>
    </location>
</feature>
<feature type="strand" evidence="12">
    <location>
        <begin position="518"/>
        <end position="521"/>
    </location>
</feature>
<feature type="strand" evidence="12">
    <location>
        <begin position="524"/>
        <end position="526"/>
    </location>
</feature>
<feature type="helix" evidence="12">
    <location>
        <begin position="529"/>
        <end position="533"/>
    </location>
</feature>
<feature type="strand" evidence="12">
    <location>
        <begin position="537"/>
        <end position="539"/>
    </location>
</feature>
<feature type="strand" evidence="12">
    <location>
        <begin position="559"/>
        <end position="561"/>
    </location>
</feature>
<feature type="helix" evidence="12">
    <location>
        <begin position="564"/>
        <end position="567"/>
    </location>
</feature>
<feature type="strand" evidence="12">
    <location>
        <begin position="571"/>
        <end position="577"/>
    </location>
</feature>
<feature type="strand" evidence="12">
    <location>
        <begin position="583"/>
        <end position="587"/>
    </location>
</feature>
<feature type="strand" evidence="12">
    <location>
        <begin position="590"/>
        <end position="594"/>
    </location>
</feature>
<feature type="strand" evidence="12">
    <location>
        <begin position="599"/>
        <end position="605"/>
    </location>
</feature>
<feature type="strand" evidence="12">
    <location>
        <begin position="610"/>
        <end position="613"/>
    </location>
</feature>
<feature type="turn" evidence="12">
    <location>
        <begin position="616"/>
        <end position="618"/>
    </location>
</feature>
<feature type="turn" evidence="12">
    <location>
        <begin position="628"/>
        <end position="630"/>
    </location>
</feature>
<feature type="turn" evidence="12">
    <location>
        <begin position="645"/>
        <end position="647"/>
    </location>
</feature>
<feature type="strand" evidence="12">
    <location>
        <begin position="651"/>
        <end position="653"/>
    </location>
</feature>
<feature type="strand" evidence="12">
    <location>
        <begin position="678"/>
        <end position="680"/>
    </location>
</feature>
<feature type="strand" evidence="12">
    <location>
        <begin position="685"/>
        <end position="693"/>
    </location>
</feature>
<feature type="turn" evidence="12">
    <location>
        <begin position="696"/>
        <end position="698"/>
    </location>
</feature>
<feature type="strand" evidence="12">
    <location>
        <begin position="704"/>
        <end position="712"/>
    </location>
</feature>
<feature type="helix" evidence="12">
    <location>
        <begin position="725"/>
        <end position="740"/>
    </location>
</feature>
<feature type="helix" evidence="12">
    <location>
        <begin position="742"/>
        <end position="747"/>
    </location>
</feature>
<name>CTSRD_MOUSE</name>
<comment type="function">
    <text evidence="3 4">Auxiliary component of the CatSper complex, a complex involved in sperm cell hyperactivation (PubMed:34225353). Sperm cell hyperactivation is needed for sperm motility which is essential late in the preparation of sperm for fertilization (PubMed:21224844). Required for CATSPER1 stability before intraflagellar transport and/or incorporation of the CatSper complex channel into the flagellar membrane (PubMed:21224844).</text>
</comment>
<comment type="subunit">
    <text evidence="1 3 4 5">Component of the CatSper complex or CatSpermasome composed of the core pore-forming members CATSPER1, CATSPER2, CATSPER3 and CATSPER4 as well as auxiliary members CATSPERB, CATSPERG2, CATSPERD, CATSPERE, CATSPERZ, C2CD6/CATSPERT, SLCO6C1, TMEM249, TMEM262 and EFCAB9 (PubMed:21224844, PubMed:34225353, PubMed:34998468). HSPA1 may be an additional auxiliary complex member (By similarity). The core complex members CATSPER1, CATSPER2, CATSPER3 and CATSPER4 form a heterotetrameric channel (PubMed:34225353). The auxiliary CATSPERB, CATSPERG2, CATSPERD and CATSPERE subunits form a pavilion-like structure over the pore which stabilizes the complex through interactions with CATSPER4, CATSPER3, CATSPER1 and CATSPER2 respectively (PubMed:34225353). SLCO6C1 interacts with CATSPERE and TMEM262/CATSPERH interacts with CATSPERB, further stabilizing the complex (PubMed:34225353). C2CD6/CATSPERT interacts at least with CATSPERD and is required for targeting the CatSper complex in the flagellar membrane (PubMed:34225353).</text>
</comment>
<comment type="subcellular location">
    <subcellularLocation>
        <location evidence="3 4">Cell projection</location>
        <location evidence="3 4">Cilium</location>
        <location evidence="3 4">Flagellum membrane</location>
        <topology evidence="2">Single-pass type I membrane protein</topology>
    </subcellularLocation>
    <text evidence="3 4">Specifically located in the principal piece of sperm tail.</text>
</comment>
<comment type="alternative products">
    <event type="alternative splicing"/>
    <isoform>
        <id>E9Q9F6-1</id>
        <name>1</name>
        <name>Tmem146-l</name>
        <name>l</name>
        <sequence type="displayed"/>
    </isoform>
    <isoform>
        <id>E9Q9F6-2</id>
        <name>2</name>
        <name>Tmem146-s</name>
        <name>s</name>
        <sequence type="described" ref="VSP_042980 VSP_042981"/>
    </isoform>
    <isoform>
        <id>E9Q9F6-3</id>
        <name>3</name>
        <sequence type="described" ref="VSP_042982"/>
    </isoform>
</comment>
<comment type="tissue specificity">
    <text evidence="3">Testis-specific.</text>
</comment>
<comment type="developmental stage">
    <text evidence="3">Expressed in spermatocytes and spermatids in different stages of spermatogenesis (at protein level).</text>
</comment>
<comment type="disruption phenotype">
    <text evidence="3">Mice are normal but males are sterile. Male sterility is due to defects in sperm cell hyperactivation and decreased stability of Catsper1.</text>
</comment>
<comment type="similarity">
    <text evidence="9">Belongs to the CATSPERD family.</text>
</comment>
<comment type="sequence caution" evidence="9">
    <conflict type="erroneous initiation">
        <sequence resource="EMBL-CDS" id="AAI16634"/>
    </conflict>
    <text>Truncated N-terminus.</text>
</comment>
<comment type="sequence caution" evidence="9">
    <conflict type="erroneous initiation">
        <sequence resource="EMBL-CDS" id="BAC36602"/>
    </conflict>
    <text>Truncated N-terminus.</text>
</comment>
<comment type="sequence caution" evidence="9">
    <conflict type="erroneous gene model prediction">
        <sequence resource="EMBL-CDS" id="EDL38183"/>
    </conflict>
</comment>
<accession>E9Q9F6</accession>
<accession>E7DZL7</accession>
<accession>E7DZL8</accession>
<accession>E9Q710</accession>
<accession>Q1JPR3</accession>
<accession>Q1LZJ6</accession>
<accession>Q8C5U5</accession>
<proteinExistence type="evidence at protein level"/>
<gene>
    <name evidence="10" type="primary">Catsperd</name>
    <name type="synonym">Tmem146</name>
</gene>
<keyword id="KW-0002">3D-structure</keyword>
<keyword id="KW-0025">Alternative splicing</keyword>
<keyword id="KW-1003">Cell membrane</keyword>
<keyword id="KW-0966">Cell projection</keyword>
<keyword id="KW-0969">Cilium</keyword>
<keyword id="KW-0217">Developmental protein</keyword>
<keyword id="KW-0221">Differentiation</keyword>
<keyword id="KW-1015">Disulfide bond</keyword>
<keyword id="KW-0282">Flagellum</keyword>
<keyword id="KW-0325">Glycoprotein</keyword>
<keyword id="KW-0472">Membrane</keyword>
<keyword id="KW-1185">Reference proteome</keyword>
<keyword id="KW-0732">Signal</keyword>
<keyword id="KW-0744">Spermatogenesis</keyword>
<keyword id="KW-0812">Transmembrane</keyword>
<keyword id="KW-1133">Transmembrane helix</keyword>
<sequence length="805" mass="91096">MLVLMLAAAVATMVRAHTLCRVHTVRTGKVFKSNIQLQGDPLFYAFPNTFVLKNVCKADISVYLGQKVFLTIDNFESSLLPLTVPKSLAVGVPSITSAHFVSGSLVLFVISGKGYSYDYYENTWRKLEGISEPVSHISGDVCCFKGSFCLELSNNLFAYLRGGQIPGTNIYFSDNGGFSFQLMNTDKLSHLTGTLGGIFHLHSMSQVGVLMVENNLGTFHYMEYPLNHSMGIAFSYKNLLEVIMKPYQRGFMVLWNQKSILVSSNSGQIVEHVRLIDQKIFTDLDVEHANINIYSVASNAYELAFLVAEDHLYYGSQSYMGTYVIKLPHQPLWSTHTSIYFEDIGILQVLTPVADPHFAAYDFDKCTVNVQSSLMDEKLALQPCNVELLESTMINTMFTIDMNSKLKLSALMIPRKGENPTPLVMVSNPHALGFKANLNEFGNTFDGNSKYKLDIELKQQHHWGNSDFNFTASIKRHAISSVTVDIADKTLSCVDLKPLSTLISVGCDMTKKIVVQNKISACTMGILNPVQLQKNYTYTIEKEAYDPINHNGEAQDDLIVFYEYKDLGCPRLVYYDKPWKPVVELWKNGIVEEIMNAEYVISEINGLVTYSYSLTAATANCRSQPQNWSTFESDIENEEPFLWNRENYVSCHEDNKDNPLLWPNVEYQVLGGQTNNKIIFGQRNGIYTFHLSVVDPYYSYCNLNTIFSVYVHGALPVTKFQPLLTILLMVTTTLLTAWLAYAIPKQLRSEKGQRLLGFCYQILQLCLGVCFCTWLRGKLRQWLRPRRVKDQNRGKVRVAQKHPET</sequence>
<evidence type="ECO:0000250" key="1">
    <source>
        <dbReference type="UniProtKB" id="Q91ZR5"/>
    </source>
</evidence>
<evidence type="ECO:0000255" key="2"/>
<evidence type="ECO:0000269" key="3">
    <source>
    </source>
</evidence>
<evidence type="ECO:0000269" key="4">
    <source>
    </source>
</evidence>
<evidence type="ECO:0000269" key="5">
    <source>
    </source>
</evidence>
<evidence type="ECO:0000303" key="6">
    <source>
    </source>
</evidence>
<evidence type="ECO:0000303" key="7">
    <source>
    </source>
</evidence>
<evidence type="ECO:0000303" key="8">
    <source>
    </source>
</evidence>
<evidence type="ECO:0000305" key="9"/>
<evidence type="ECO:0000312" key="10">
    <source>
        <dbReference type="MGI" id="MGI:2147030"/>
    </source>
</evidence>
<evidence type="ECO:0007744" key="11">
    <source>
        <dbReference type="PDB" id="7EEB"/>
    </source>
</evidence>
<evidence type="ECO:0007829" key="12">
    <source>
        <dbReference type="PDB" id="7EEB"/>
    </source>
</evidence>
<organism>
    <name type="scientific">Mus musculus</name>
    <name type="common">Mouse</name>
    <dbReference type="NCBI Taxonomy" id="10090"/>
    <lineage>
        <taxon>Eukaryota</taxon>
        <taxon>Metazoa</taxon>
        <taxon>Chordata</taxon>
        <taxon>Craniata</taxon>
        <taxon>Vertebrata</taxon>
        <taxon>Euteleostomi</taxon>
        <taxon>Mammalia</taxon>
        <taxon>Eutheria</taxon>
        <taxon>Euarchontoglires</taxon>
        <taxon>Glires</taxon>
        <taxon>Rodentia</taxon>
        <taxon>Myomorpha</taxon>
        <taxon>Muroidea</taxon>
        <taxon>Muridae</taxon>
        <taxon>Murinae</taxon>
        <taxon>Mus</taxon>
        <taxon>Mus</taxon>
    </lineage>
</organism>
<dbReference type="EMBL" id="HQ441159">
    <property type="protein sequence ID" value="ADU32560.1"/>
    <property type="molecule type" value="mRNA"/>
</dbReference>
<dbReference type="EMBL" id="HQ441160">
    <property type="protein sequence ID" value="ADU32561.1"/>
    <property type="molecule type" value="mRNA"/>
</dbReference>
<dbReference type="EMBL" id="CT010491">
    <property type="status" value="NOT_ANNOTATED_CDS"/>
    <property type="molecule type" value="Genomic_DNA"/>
</dbReference>
<dbReference type="EMBL" id="CT485788">
    <property type="status" value="NOT_ANNOTATED_CDS"/>
    <property type="molecule type" value="Genomic_DNA"/>
</dbReference>
<dbReference type="EMBL" id="CH466537">
    <property type="protein sequence ID" value="EDL38183.1"/>
    <property type="status" value="ALT_SEQ"/>
    <property type="molecule type" value="Genomic_DNA"/>
</dbReference>
<dbReference type="EMBL" id="AK077082">
    <property type="protein sequence ID" value="BAC36602.1"/>
    <property type="status" value="ALT_INIT"/>
    <property type="molecule type" value="mRNA"/>
</dbReference>
<dbReference type="EMBL" id="BC115864">
    <property type="protein sequence ID" value="AAI15865.1"/>
    <property type="molecule type" value="mRNA"/>
</dbReference>
<dbReference type="EMBL" id="BC116633">
    <property type="protein sequence ID" value="AAI16634.1"/>
    <property type="status" value="ALT_INIT"/>
    <property type="molecule type" value="mRNA"/>
</dbReference>
<dbReference type="CCDS" id="CCDS50153.1">
    <molecule id="E9Q9F6-1"/>
</dbReference>
<dbReference type="RefSeq" id="NP_780559.2">
    <molecule id="E9Q9F6-1"/>
    <property type="nucleotide sequence ID" value="NM_175350.4"/>
</dbReference>
<dbReference type="PDB" id="7EEB">
    <property type="method" value="EM"/>
    <property type="resolution" value="2.90 A"/>
    <property type="chains" value="G=1-805"/>
</dbReference>
<dbReference type="PDBsum" id="7EEB"/>
<dbReference type="EMDB" id="EMD-31076"/>
<dbReference type="SMR" id="E9Q9F6"/>
<dbReference type="ComplexPortal" id="CPX-9078">
    <property type="entry name" value="CatSpermasome complex, gamma subunit variant 2"/>
</dbReference>
<dbReference type="CORUM" id="E9Q9F6"/>
<dbReference type="FunCoup" id="E9Q9F6">
    <property type="interactions" value="24"/>
</dbReference>
<dbReference type="STRING" id="10090.ENSMUSP00000108603"/>
<dbReference type="TCDB" id="1.A.1.19.3">
    <property type="family name" value="the voltage-gated ion channel (vic) superfamily"/>
</dbReference>
<dbReference type="GlyCosmos" id="E9Q9F6">
    <property type="glycosylation" value="5 sites, No reported glycans"/>
</dbReference>
<dbReference type="GlyGen" id="E9Q9F6">
    <property type="glycosylation" value="5 sites"/>
</dbReference>
<dbReference type="iPTMnet" id="E9Q9F6"/>
<dbReference type="PhosphoSitePlus" id="E9Q9F6"/>
<dbReference type="SwissPalm" id="E9Q9F6"/>
<dbReference type="PaxDb" id="10090-ENSMUSP00000108603"/>
<dbReference type="ProteomicsDB" id="285430">
    <molecule id="E9Q9F6-1"/>
</dbReference>
<dbReference type="ProteomicsDB" id="285431">
    <molecule id="E9Q9F6-2"/>
</dbReference>
<dbReference type="ProteomicsDB" id="285432">
    <molecule id="E9Q9F6-3"/>
</dbReference>
<dbReference type="Antibodypedia" id="11727">
    <property type="antibodies" value="49 antibodies from 15 providers"/>
</dbReference>
<dbReference type="DNASU" id="106757"/>
<dbReference type="Ensembl" id="ENSMUST00000112979.4">
    <molecule id="E9Q9F6-1"/>
    <property type="protein sequence ID" value="ENSMUSP00000108603.3"/>
    <property type="gene ID" value="ENSMUSG00000040828.11"/>
</dbReference>
<dbReference type="GeneID" id="106757"/>
<dbReference type="KEGG" id="mmu:106757"/>
<dbReference type="UCSC" id="uc008dcr.2">
    <molecule id="E9Q9F6-3"/>
    <property type="organism name" value="mouse"/>
</dbReference>
<dbReference type="UCSC" id="uc008dcs.2">
    <molecule id="E9Q9F6-1"/>
    <property type="organism name" value="mouse"/>
</dbReference>
<dbReference type="AGR" id="MGI:2147030"/>
<dbReference type="CTD" id="257062"/>
<dbReference type="MGI" id="MGI:2147030">
    <property type="gene designation" value="Catsperd"/>
</dbReference>
<dbReference type="VEuPathDB" id="HostDB:ENSMUSG00000040828"/>
<dbReference type="eggNOG" id="ENOG502QSPE">
    <property type="taxonomic scope" value="Eukaryota"/>
</dbReference>
<dbReference type="GeneTree" id="ENSGT00940000162714"/>
<dbReference type="HOGENOM" id="CLU_019182_0_0_1"/>
<dbReference type="InParanoid" id="E9Q9F6"/>
<dbReference type="OMA" id="HPYILHH"/>
<dbReference type="OrthoDB" id="8646292at2759"/>
<dbReference type="PhylomeDB" id="E9Q9F6"/>
<dbReference type="TreeFam" id="TF337973"/>
<dbReference type="Reactome" id="R-MMU-1300642">
    <property type="pathway name" value="Sperm Motility And Taxes"/>
</dbReference>
<dbReference type="BioGRID-ORCS" id="106757">
    <property type="hits" value="1 hit in 77 CRISPR screens"/>
</dbReference>
<dbReference type="ChiTaRS" id="Catsperd">
    <property type="organism name" value="mouse"/>
</dbReference>
<dbReference type="PRO" id="PR:E9Q9F6"/>
<dbReference type="Proteomes" id="UP000000589">
    <property type="component" value="Chromosome 17"/>
</dbReference>
<dbReference type="RNAct" id="E9Q9F6">
    <property type="molecule type" value="protein"/>
</dbReference>
<dbReference type="Bgee" id="ENSMUSG00000040828">
    <property type="expression patterns" value="Expressed in spermatocyte and 54 other cell types or tissues"/>
</dbReference>
<dbReference type="ExpressionAtlas" id="E9Q9F6">
    <property type="expression patterns" value="baseline and differential"/>
</dbReference>
<dbReference type="GO" id="GO:0036128">
    <property type="term" value="C:CatSper complex"/>
    <property type="evidence" value="ECO:0000314"/>
    <property type="project" value="UniProtKB"/>
</dbReference>
<dbReference type="GO" id="GO:0097228">
    <property type="term" value="C:sperm principal piece"/>
    <property type="evidence" value="ECO:0000314"/>
    <property type="project" value="UniProtKB"/>
</dbReference>
<dbReference type="GO" id="GO:0030317">
    <property type="term" value="P:flagellated sperm motility"/>
    <property type="evidence" value="ECO:0000315"/>
    <property type="project" value="UniProtKB"/>
</dbReference>
<dbReference type="GO" id="GO:0048240">
    <property type="term" value="P:sperm capacitation"/>
    <property type="evidence" value="ECO:0000315"/>
    <property type="project" value="UniProtKB"/>
</dbReference>
<dbReference type="GO" id="GO:0007283">
    <property type="term" value="P:spermatogenesis"/>
    <property type="evidence" value="ECO:0000315"/>
    <property type="project" value="UniProtKB"/>
</dbReference>
<dbReference type="InterPro" id="IPR028751">
    <property type="entry name" value="CATSPERD/E"/>
</dbReference>
<dbReference type="InterPro" id="IPR053814">
    <property type="entry name" value="CATSPERD/E_C"/>
</dbReference>
<dbReference type="InterPro" id="IPR053813">
    <property type="entry name" value="CATSPERD_b-prop"/>
</dbReference>
<dbReference type="InterPro" id="IPR055451">
    <property type="entry name" value="Ig-like_CATSPERD"/>
</dbReference>
<dbReference type="PANTHER" id="PTHR33722:SF1">
    <property type="entry name" value="CATION CHANNEL SPERM-ASSOCIATED AUXILIARY SUBUNIT DELTA"/>
    <property type="match status" value="1"/>
</dbReference>
<dbReference type="PANTHER" id="PTHR33722">
    <property type="entry name" value="CATION CHANNEL SPERM-ASSOCIATED PROTEIN SUBUNIT DELTA-RELATED"/>
    <property type="match status" value="1"/>
</dbReference>
<dbReference type="Pfam" id="PF15020">
    <property type="entry name" value="Beta-prop_CATSPERD"/>
    <property type="match status" value="1"/>
</dbReference>
<dbReference type="Pfam" id="PF22850">
    <property type="entry name" value="CATSPERD-E_C"/>
    <property type="match status" value="1"/>
</dbReference>
<dbReference type="Pfam" id="PF23747">
    <property type="entry name" value="Ig-like_CATSPERD"/>
    <property type="match status" value="1"/>
</dbReference>
<protein>
    <recommendedName>
        <fullName evidence="10">Cation channel sperm-associated auxiliary subunit delta</fullName>
        <shortName>CatSper-delta</shortName>
        <shortName>CatSperdelta</shortName>
    </recommendedName>
    <alternativeName>
        <fullName>Transmembrane protein 146</fullName>
    </alternativeName>
</protein>
<reference key="1">
    <citation type="journal article" date="2011" name="Nat. Commun.">
        <title>A novel gene required for male fertility and functional CATSPER channel formation in spermatozoa.</title>
        <authorList>
            <person name="Chung J.J."/>
            <person name="Navarro B."/>
            <person name="Krapivinsky G."/>
            <person name="Krapivinsky L."/>
            <person name="Clapham D.E."/>
        </authorList>
    </citation>
    <scope>NUCLEOTIDE SEQUENCE [MRNA] (ISOFORMS 1 AND 2)</scope>
    <scope>FUNCTION</scope>
    <scope>SUBCELLULAR LOCATION</scope>
    <scope>IDENTIFICATION IN THE CATSPER COMPLEX</scope>
    <scope>TISSUE SPECIFICITY</scope>
    <scope>DEVELOPMENTAL STAGE</scope>
    <scope>DISRUPTION PHENOTYPE</scope>
    <source>
        <strain>C57BL/6J</strain>
    </source>
</reference>
<reference key="2">
    <citation type="journal article" date="2009" name="PLoS Biol.">
        <title>Lineage-specific biology revealed by a finished genome assembly of the mouse.</title>
        <authorList>
            <person name="Church D.M."/>
            <person name="Goodstadt L."/>
            <person name="Hillier L.W."/>
            <person name="Zody M.C."/>
            <person name="Goldstein S."/>
            <person name="She X."/>
            <person name="Bult C.J."/>
            <person name="Agarwala R."/>
            <person name="Cherry J.L."/>
            <person name="DiCuccio M."/>
            <person name="Hlavina W."/>
            <person name="Kapustin Y."/>
            <person name="Meric P."/>
            <person name="Maglott D."/>
            <person name="Birtle Z."/>
            <person name="Marques A.C."/>
            <person name="Graves T."/>
            <person name="Zhou S."/>
            <person name="Teague B."/>
            <person name="Potamousis K."/>
            <person name="Churas C."/>
            <person name="Place M."/>
            <person name="Herschleb J."/>
            <person name="Runnheim R."/>
            <person name="Forrest D."/>
            <person name="Amos-Landgraf J."/>
            <person name="Schwartz D.C."/>
            <person name="Cheng Z."/>
            <person name="Lindblad-Toh K."/>
            <person name="Eichler E.E."/>
            <person name="Ponting C.P."/>
        </authorList>
    </citation>
    <scope>NUCLEOTIDE SEQUENCE [LARGE SCALE GENOMIC DNA]</scope>
    <source>
        <strain>C57BL/6J</strain>
    </source>
</reference>
<reference key="3">
    <citation type="submission" date="2005-07" db="EMBL/GenBank/DDBJ databases">
        <authorList>
            <person name="Mural R.J."/>
            <person name="Adams M.D."/>
            <person name="Myers E.W."/>
            <person name="Smith H.O."/>
            <person name="Venter J.C."/>
        </authorList>
    </citation>
    <scope>NUCLEOTIDE SEQUENCE [LARGE SCALE GENOMIC DNA]</scope>
</reference>
<reference key="4">
    <citation type="journal article" date="2005" name="Science">
        <title>The transcriptional landscape of the mammalian genome.</title>
        <authorList>
            <person name="Carninci P."/>
            <person name="Kasukawa T."/>
            <person name="Katayama S."/>
            <person name="Gough J."/>
            <person name="Frith M.C."/>
            <person name="Maeda N."/>
            <person name="Oyama R."/>
            <person name="Ravasi T."/>
            <person name="Lenhard B."/>
            <person name="Wells C."/>
            <person name="Kodzius R."/>
            <person name="Shimokawa K."/>
            <person name="Bajic V.B."/>
            <person name="Brenner S.E."/>
            <person name="Batalov S."/>
            <person name="Forrest A.R."/>
            <person name="Zavolan M."/>
            <person name="Davis M.J."/>
            <person name="Wilming L.G."/>
            <person name="Aidinis V."/>
            <person name="Allen J.E."/>
            <person name="Ambesi-Impiombato A."/>
            <person name="Apweiler R."/>
            <person name="Aturaliya R.N."/>
            <person name="Bailey T.L."/>
            <person name="Bansal M."/>
            <person name="Baxter L."/>
            <person name="Beisel K.W."/>
            <person name="Bersano T."/>
            <person name="Bono H."/>
            <person name="Chalk A.M."/>
            <person name="Chiu K.P."/>
            <person name="Choudhary V."/>
            <person name="Christoffels A."/>
            <person name="Clutterbuck D.R."/>
            <person name="Crowe M.L."/>
            <person name="Dalla E."/>
            <person name="Dalrymple B.P."/>
            <person name="de Bono B."/>
            <person name="Della Gatta G."/>
            <person name="di Bernardo D."/>
            <person name="Down T."/>
            <person name="Engstrom P."/>
            <person name="Fagiolini M."/>
            <person name="Faulkner G."/>
            <person name="Fletcher C.F."/>
            <person name="Fukushima T."/>
            <person name="Furuno M."/>
            <person name="Futaki S."/>
            <person name="Gariboldi M."/>
            <person name="Georgii-Hemming P."/>
            <person name="Gingeras T.R."/>
            <person name="Gojobori T."/>
            <person name="Green R.E."/>
            <person name="Gustincich S."/>
            <person name="Harbers M."/>
            <person name="Hayashi Y."/>
            <person name="Hensch T.K."/>
            <person name="Hirokawa N."/>
            <person name="Hill D."/>
            <person name="Huminiecki L."/>
            <person name="Iacono M."/>
            <person name="Ikeo K."/>
            <person name="Iwama A."/>
            <person name="Ishikawa T."/>
            <person name="Jakt M."/>
            <person name="Kanapin A."/>
            <person name="Katoh M."/>
            <person name="Kawasawa Y."/>
            <person name="Kelso J."/>
            <person name="Kitamura H."/>
            <person name="Kitano H."/>
            <person name="Kollias G."/>
            <person name="Krishnan S.P."/>
            <person name="Kruger A."/>
            <person name="Kummerfeld S.K."/>
            <person name="Kurochkin I.V."/>
            <person name="Lareau L.F."/>
            <person name="Lazarevic D."/>
            <person name="Lipovich L."/>
            <person name="Liu J."/>
            <person name="Liuni S."/>
            <person name="McWilliam S."/>
            <person name="Madan Babu M."/>
            <person name="Madera M."/>
            <person name="Marchionni L."/>
            <person name="Matsuda H."/>
            <person name="Matsuzawa S."/>
            <person name="Miki H."/>
            <person name="Mignone F."/>
            <person name="Miyake S."/>
            <person name="Morris K."/>
            <person name="Mottagui-Tabar S."/>
            <person name="Mulder N."/>
            <person name="Nakano N."/>
            <person name="Nakauchi H."/>
            <person name="Ng P."/>
            <person name="Nilsson R."/>
            <person name="Nishiguchi S."/>
            <person name="Nishikawa S."/>
            <person name="Nori F."/>
            <person name="Ohara O."/>
            <person name="Okazaki Y."/>
            <person name="Orlando V."/>
            <person name="Pang K.C."/>
            <person name="Pavan W.J."/>
            <person name="Pavesi G."/>
            <person name="Pesole G."/>
            <person name="Petrovsky N."/>
            <person name="Piazza S."/>
            <person name="Reed J."/>
            <person name="Reid J.F."/>
            <person name="Ring B.Z."/>
            <person name="Ringwald M."/>
            <person name="Rost B."/>
            <person name="Ruan Y."/>
            <person name="Salzberg S.L."/>
            <person name="Sandelin A."/>
            <person name="Schneider C."/>
            <person name="Schoenbach C."/>
            <person name="Sekiguchi K."/>
            <person name="Semple C.A."/>
            <person name="Seno S."/>
            <person name="Sessa L."/>
            <person name="Sheng Y."/>
            <person name="Shibata Y."/>
            <person name="Shimada H."/>
            <person name="Shimada K."/>
            <person name="Silva D."/>
            <person name="Sinclair B."/>
            <person name="Sperling S."/>
            <person name="Stupka E."/>
            <person name="Sugiura K."/>
            <person name="Sultana R."/>
            <person name="Takenaka Y."/>
            <person name="Taki K."/>
            <person name="Tammoja K."/>
            <person name="Tan S.L."/>
            <person name="Tang S."/>
            <person name="Taylor M.S."/>
            <person name="Tegner J."/>
            <person name="Teichmann S.A."/>
            <person name="Ueda H.R."/>
            <person name="van Nimwegen E."/>
            <person name="Verardo R."/>
            <person name="Wei C.L."/>
            <person name="Yagi K."/>
            <person name="Yamanishi H."/>
            <person name="Zabarovsky E."/>
            <person name="Zhu S."/>
            <person name="Zimmer A."/>
            <person name="Hide W."/>
            <person name="Bult C."/>
            <person name="Grimmond S.M."/>
            <person name="Teasdale R.D."/>
            <person name="Liu E.T."/>
            <person name="Brusic V."/>
            <person name="Quackenbush J."/>
            <person name="Wahlestedt C."/>
            <person name="Mattick J.S."/>
            <person name="Hume D.A."/>
            <person name="Kai C."/>
            <person name="Sasaki D."/>
            <person name="Tomaru Y."/>
            <person name="Fukuda S."/>
            <person name="Kanamori-Katayama M."/>
            <person name="Suzuki M."/>
            <person name="Aoki J."/>
            <person name="Arakawa T."/>
            <person name="Iida J."/>
            <person name="Imamura K."/>
            <person name="Itoh M."/>
            <person name="Kato T."/>
            <person name="Kawaji H."/>
            <person name="Kawagashira N."/>
            <person name="Kawashima T."/>
            <person name="Kojima M."/>
            <person name="Kondo S."/>
            <person name="Konno H."/>
            <person name="Nakano K."/>
            <person name="Ninomiya N."/>
            <person name="Nishio T."/>
            <person name="Okada M."/>
            <person name="Plessy C."/>
            <person name="Shibata K."/>
            <person name="Shiraki T."/>
            <person name="Suzuki S."/>
            <person name="Tagami M."/>
            <person name="Waki K."/>
            <person name="Watahiki A."/>
            <person name="Okamura-Oho Y."/>
            <person name="Suzuki H."/>
            <person name="Kawai J."/>
            <person name="Hayashizaki Y."/>
        </authorList>
    </citation>
    <scope>NUCLEOTIDE SEQUENCE [LARGE SCALE MRNA] OF 261-805 (ISOFORM 3)</scope>
    <source>
        <strain>C57BL/6J</strain>
        <tissue>Testis</tissue>
    </source>
</reference>
<reference key="5">
    <citation type="journal article" date="2004" name="Genome Res.">
        <title>The status, quality, and expansion of the NIH full-length cDNA project: the Mammalian Gene Collection (MGC).</title>
        <authorList>
            <consortium name="The MGC Project Team"/>
        </authorList>
    </citation>
    <scope>NUCLEOTIDE SEQUENCE [LARGE SCALE MRNA] OF 297-805 (ISOFORMS 1 AND 3)</scope>
</reference>
<reference key="6">
    <citation type="journal article" date="2022" name="Cell Rep.">
        <title>C2cd6-encoded CatSpertau targets sperm calcium channel to Ca2+ signaling domains in the flagellar membrane.</title>
        <authorList>
            <person name="Hwang J.Y."/>
            <person name="Wang H."/>
            <person name="Lu Y."/>
            <person name="Ikawa M."/>
            <person name="Chung J.J."/>
        </authorList>
    </citation>
    <scope>IDENTIFICATION IN THE CATSPER COMPLEX</scope>
    <scope>SUBCELLULAR LOCATION</scope>
</reference>
<reference key="7">
    <citation type="journal article" date="2021" name="Nature">
        <title>Structure of a mammalian sperm cation channel complex.</title>
        <authorList>
            <person name="Lin S."/>
            <person name="Ke M."/>
            <person name="Zhang Y."/>
            <person name="Yan Z."/>
            <person name="Wu J."/>
        </authorList>
    </citation>
    <scope>STRUCTURE BY ELECTRON MICROSCOPY (2.9 ANGSTROMS) OF THE CATSPER COMPLEX</scope>
    <scope>IDENTIFICATION BY MASS SPECTROMETRY</scope>
    <scope>FUNCTION</scope>
    <scope>TRANSMEMBRANE DOMAIN</scope>
    <scope>TOPOLOGY</scope>
    <scope>DISULFIDE BONDS</scope>
    <scope>GLYCOSYLATION AT ASN-227; ASN-469; ASN-535 AND ASN-627</scope>
</reference>